<sequence>MGEYIMEKNTIILGIETSCDETAVAVVKNGTEIIANVVASQIESHKRFGGVVPEIASRHHVEEITVVLEEALKEANITFDDIDAIAVTEGPGLVGALLIGVNAAKAVAFAHDIPLVGVHHIAGHIYANRLVKEVQFPLLSLVVSGGHTELVYMKEHGSFEVIGETRDDAAGEAYDKVARTLSMPYPGGPHIDRLAHEGKPTIDLPRAWLEPDSYDFSFSGLKSAVINTVHNAKQRGIEIAPEDLAASFQESVIDVLVTKASRAADAYNVKQVLLAGGVAANKGLRARLETEFAQKENVELIIPPLSLCTDNAAMIAAAGTIAYEQGKRATLALNANPGLDIEA</sequence>
<organism>
    <name type="scientific">Bacillus cereus (strain ZK / E33L)</name>
    <dbReference type="NCBI Taxonomy" id="288681"/>
    <lineage>
        <taxon>Bacteria</taxon>
        <taxon>Bacillati</taxon>
        <taxon>Bacillota</taxon>
        <taxon>Bacilli</taxon>
        <taxon>Bacillales</taxon>
        <taxon>Bacillaceae</taxon>
        <taxon>Bacillus</taxon>
        <taxon>Bacillus cereus group</taxon>
    </lineage>
</organism>
<evidence type="ECO:0000255" key="1">
    <source>
        <dbReference type="HAMAP-Rule" id="MF_01445"/>
    </source>
</evidence>
<name>TSAD_BACCZ</name>
<feature type="chain" id="PRO_0000303265" description="tRNA N6-adenosine threonylcarbamoyltransferase">
    <location>
        <begin position="1"/>
        <end position="343"/>
    </location>
</feature>
<feature type="binding site" evidence="1">
    <location>
        <position position="120"/>
    </location>
    <ligand>
        <name>Fe cation</name>
        <dbReference type="ChEBI" id="CHEBI:24875"/>
    </ligand>
</feature>
<feature type="binding site" evidence="1">
    <location>
        <position position="124"/>
    </location>
    <ligand>
        <name>Fe cation</name>
        <dbReference type="ChEBI" id="CHEBI:24875"/>
    </ligand>
</feature>
<feature type="binding site" evidence="1">
    <location>
        <begin position="142"/>
        <end position="146"/>
    </location>
    <ligand>
        <name>substrate</name>
    </ligand>
</feature>
<feature type="binding site" evidence="1">
    <location>
        <position position="175"/>
    </location>
    <ligand>
        <name>substrate</name>
    </ligand>
</feature>
<feature type="binding site" evidence="1">
    <location>
        <position position="188"/>
    </location>
    <ligand>
        <name>substrate</name>
    </ligand>
</feature>
<feature type="binding site" evidence="1">
    <location>
        <position position="192"/>
    </location>
    <ligand>
        <name>substrate</name>
    </ligand>
</feature>
<feature type="binding site" evidence="1">
    <location>
        <position position="281"/>
    </location>
    <ligand>
        <name>substrate</name>
    </ligand>
</feature>
<feature type="binding site" evidence="1">
    <location>
        <position position="310"/>
    </location>
    <ligand>
        <name>Fe cation</name>
        <dbReference type="ChEBI" id="CHEBI:24875"/>
    </ligand>
</feature>
<proteinExistence type="inferred from homology"/>
<accession>Q63GW2</accession>
<gene>
    <name evidence="1" type="primary">tsaD</name>
    <name type="synonym">gcp</name>
    <name type="ordered locus">BCE33L0235</name>
</gene>
<comment type="function">
    <text evidence="1">Required for the formation of a threonylcarbamoyl group on adenosine at position 37 (t(6)A37) in tRNAs that read codons beginning with adenine. Is involved in the transfer of the threonylcarbamoyl moiety of threonylcarbamoyl-AMP (TC-AMP) to the N6 group of A37, together with TsaE and TsaB. TsaD likely plays a direct catalytic role in this reaction.</text>
</comment>
<comment type="catalytic activity">
    <reaction evidence="1">
        <text>L-threonylcarbamoyladenylate + adenosine(37) in tRNA = N(6)-L-threonylcarbamoyladenosine(37) in tRNA + AMP + H(+)</text>
        <dbReference type="Rhea" id="RHEA:37059"/>
        <dbReference type="Rhea" id="RHEA-COMP:10162"/>
        <dbReference type="Rhea" id="RHEA-COMP:10163"/>
        <dbReference type="ChEBI" id="CHEBI:15378"/>
        <dbReference type="ChEBI" id="CHEBI:73682"/>
        <dbReference type="ChEBI" id="CHEBI:74411"/>
        <dbReference type="ChEBI" id="CHEBI:74418"/>
        <dbReference type="ChEBI" id="CHEBI:456215"/>
        <dbReference type="EC" id="2.3.1.234"/>
    </reaction>
</comment>
<comment type="cofactor">
    <cofactor evidence="1">
        <name>Fe(2+)</name>
        <dbReference type="ChEBI" id="CHEBI:29033"/>
    </cofactor>
    <text evidence="1">Binds 1 Fe(2+) ion per subunit.</text>
</comment>
<comment type="subcellular location">
    <subcellularLocation>
        <location evidence="1">Cytoplasm</location>
    </subcellularLocation>
</comment>
<comment type="similarity">
    <text evidence="1">Belongs to the KAE1 / TsaD family.</text>
</comment>
<protein>
    <recommendedName>
        <fullName evidence="1">tRNA N6-adenosine threonylcarbamoyltransferase</fullName>
        <ecNumber evidence="1">2.3.1.234</ecNumber>
    </recommendedName>
    <alternativeName>
        <fullName evidence="1">N6-L-threonylcarbamoyladenine synthase</fullName>
        <shortName evidence="1">t(6)A synthase</shortName>
    </alternativeName>
    <alternativeName>
        <fullName evidence="1">t(6)A37 threonylcarbamoyladenosine biosynthesis protein TsaD</fullName>
    </alternativeName>
    <alternativeName>
        <fullName evidence="1">tRNA threonylcarbamoyladenosine biosynthesis protein TsaD</fullName>
    </alternativeName>
</protein>
<reference key="1">
    <citation type="journal article" date="2006" name="J. Bacteriol.">
        <title>Pathogenomic sequence analysis of Bacillus cereus and Bacillus thuringiensis isolates closely related to Bacillus anthracis.</title>
        <authorList>
            <person name="Han C.S."/>
            <person name="Xie G."/>
            <person name="Challacombe J.F."/>
            <person name="Altherr M.R."/>
            <person name="Bhotika S.S."/>
            <person name="Bruce D."/>
            <person name="Campbell C.S."/>
            <person name="Campbell M.L."/>
            <person name="Chen J."/>
            <person name="Chertkov O."/>
            <person name="Cleland C."/>
            <person name="Dimitrijevic M."/>
            <person name="Doggett N.A."/>
            <person name="Fawcett J.J."/>
            <person name="Glavina T."/>
            <person name="Goodwin L.A."/>
            <person name="Hill K.K."/>
            <person name="Hitchcock P."/>
            <person name="Jackson P.J."/>
            <person name="Keim P."/>
            <person name="Kewalramani A.R."/>
            <person name="Longmire J."/>
            <person name="Lucas S."/>
            <person name="Malfatti S."/>
            <person name="McMurry K."/>
            <person name="Meincke L.J."/>
            <person name="Misra M."/>
            <person name="Moseman B.L."/>
            <person name="Mundt M."/>
            <person name="Munk A.C."/>
            <person name="Okinaka R.T."/>
            <person name="Parson-Quintana B."/>
            <person name="Reilly L.P."/>
            <person name="Richardson P."/>
            <person name="Robinson D.L."/>
            <person name="Rubin E."/>
            <person name="Saunders E."/>
            <person name="Tapia R."/>
            <person name="Tesmer J.G."/>
            <person name="Thayer N."/>
            <person name="Thompson L.S."/>
            <person name="Tice H."/>
            <person name="Ticknor L.O."/>
            <person name="Wills P.L."/>
            <person name="Brettin T.S."/>
            <person name="Gilna P."/>
        </authorList>
    </citation>
    <scope>NUCLEOTIDE SEQUENCE [LARGE SCALE GENOMIC DNA]</scope>
    <source>
        <strain>ZK / E33L</strain>
    </source>
</reference>
<dbReference type="EC" id="2.3.1.234" evidence="1"/>
<dbReference type="EMBL" id="CP000001">
    <property type="protein sequence ID" value="AAU19999.1"/>
    <property type="molecule type" value="Genomic_DNA"/>
</dbReference>
<dbReference type="SMR" id="Q63GW2"/>
<dbReference type="KEGG" id="bcz:BCE33L0235"/>
<dbReference type="Proteomes" id="UP000002612">
    <property type="component" value="Chromosome"/>
</dbReference>
<dbReference type="GO" id="GO:0005737">
    <property type="term" value="C:cytoplasm"/>
    <property type="evidence" value="ECO:0007669"/>
    <property type="project" value="UniProtKB-SubCell"/>
</dbReference>
<dbReference type="GO" id="GO:0005506">
    <property type="term" value="F:iron ion binding"/>
    <property type="evidence" value="ECO:0007669"/>
    <property type="project" value="UniProtKB-UniRule"/>
</dbReference>
<dbReference type="GO" id="GO:0061711">
    <property type="term" value="F:N(6)-L-threonylcarbamoyladenine synthase activity"/>
    <property type="evidence" value="ECO:0007669"/>
    <property type="project" value="UniProtKB-EC"/>
</dbReference>
<dbReference type="GO" id="GO:0002949">
    <property type="term" value="P:tRNA threonylcarbamoyladenosine modification"/>
    <property type="evidence" value="ECO:0007669"/>
    <property type="project" value="UniProtKB-UniRule"/>
</dbReference>
<dbReference type="CDD" id="cd24133">
    <property type="entry name" value="ASKHA_NBD_TsaD_bac"/>
    <property type="match status" value="1"/>
</dbReference>
<dbReference type="FunFam" id="3.30.420.40:FF:000012">
    <property type="entry name" value="tRNA N6-adenosine threonylcarbamoyltransferase"/>
    <property type="match status" value="1"/>
</dbReference>
<dbReference type="FunFam" id="3.30.420.40:FF:000040">
    <property type="entry name" value="tRNA N6-adenosine threonylcarbamoyltransferase"/>
    <property type="match status" value="1"/>
</dbReference>
<dbReference type="Gene3D" id="3.30.420.40">
    <property type="match status" value="2"/>
</dbReference>
<dbReference type="HAMAP" id="MF_01445">
    <property type="entry name" value="TsaD"/>
    <property type="match status" value="1"/>
</dbReference>
<dbReference type="InterPro" id="IPR043129">
    <property type="entry name" value="ATPase_NBD"/>
</dbReference>
<dbReference type="InterPro" id="IPR000905">
    <property type="entry name" value="Gcp-like_dom"/>
</dbReference>
<dbReference type="InterPro" id="IPR017861">
    <property type="entry name" value="KAE1/TsaD"/>
</dbReference>
<dbReference type="InterPro" id="IPR017860">
    <property type="entry name" value="Peptidase_M22_CS"/>
</dbReference>
<dbReference type="InterPro" id="IPR022450">
    <property type="entry name" value="TsaD"/>
</dbReference>
<dbReference type="NCBIfam" id="TIGR00329">
    <property type="entry name" value="gcp_kae1"/>
    <property type="match status" value="1"/>
</dbReference>
<dbReference type="NCBIfam" id="TIGR03723">
    <property type="entry name" value="T6A_TsaD_YgjD"/>
    <property type="match status" value="1"/>
</dbReference>
<dbReference type="PANTHER" id="PTHR11735">
    <property type="entry name" value="TRNA N6-ADENOSINE THREONYLCARBAMOYLTRANSFERASE"/>
    <property type="match status" value="1"/>
</dbReference>
<dbReference type="PANTHER" id="PTHR11735:SF6">
    <property type="entry name" value="TRNA N6-ADENOSINE THREONYLCARBAMOYLTRANSFERASE, MITOCHONDRIAL"/>
    <property type="match status" value="1"/>
</dbReference>
<dbReference type="Pfam" id="PF00814">
    <property type="entry name" value="TsaD"/>
    <property type="match status" value="1"/>
</dbReference>
<dbReference type="PRINTS" id="PR00789">
    <property type="entry name" value="OSIALOPTASE"/>
</dbReference>
<dbReference type="SUPFAM" id="SSF53067">
    <property type="entry name" value="Actin-like ATPase domain"/>
    <property type="match status" value="2"/>
</dbReference>
<dbReference type="PROSITE" id="PS01016">
    <property type="entry name" value="GLYCOPROTEASE"/>
    <property type="match status" value="1"/>
</dbReference>
<keyword id="KW-0012">Acyltransferase</keyword>
<keyword id="KW-0963">Cytoplasm</keyword>
<keyword id="KW-0408">Iron</keyword>
<keyword id="KW-0479">Metal-binding</keyword>
<keyword id="KW-0808">Transferase</keyword>
<keyword id="KW-0819">tRNA processing</keyword>